<evidence type="ECO:0000255" key="1">
    <source>
        <dbReference type="HAMAP-Rule" id="MF_01363"/>
    </source>
</evidence>
<evidence type="ECO:0000305" key="2"/>
<gene>
    <name evidence="1" type="primary">rplU</name>
    <name type="ordered locus">KPN78578_35650</name>
    <name type="ORF">KPN_03596</name>
</gene>
<organism>
    <name type="scientific">Klebsiella pneumoniae subsp. pneumoniae (strain ATCC 700721 / MGH 78578)</name>
    <dbReference type="NCBI Taxonomy" id="272620"/>
    <lineage>
        <taxon>Bacteria</taxon>
        <taxon>Pseudomonadati</taxon>
        <taxon>Pseudomonadota</taxon>
        <taxon>Gammaproteobacteria</taxon>
        <taxon>Enterobacterales</taxon>
        <taxon>Enterobacteriaceae</taxon>
        <taxon>Klebsiella/Raoultella group</taxon>
        <taxon>Klebsiella</taxon>
        <taxon>Klebsiella pneumoniae complex</taxon>
    </lineage>
</organism>
<keyword id="KW-0687">Ribonucleoprotein</keyword>
<keyword id="KW-0689">Ribosomal protein</keyword>
<keyword id="KW-0694">RNA-binding</keyword>
<keyword id="KW-0699">rRNA-binding</keyword>
<sequence length="103" mass="11562">MYAVFQSGGKQHRVSEGQTVRLEKLDIATGEAVEFAEVLMIANGEEIKIGVPFVEGGVIKAEVVAHGRGEKVKIVKFRRRKHYRKQQGHRQWFTDVKITGISA</sequence>
<feature type="chain" id="PRO_1000067843" description="Large ribosomal subunit protein bL21">
    <location>
        <begin position="1"/>
        <end position="103"/>
    </location>
</feature>
<name>RL21_KLEP7</name>
<dbReference type="EMBL" id="CP000647">
    <property type="protein sequence ID" value="ABR78989.1"/>
    <property type="molecule type" value="Genomic_DNA"/>
</dbReference>
<dbReference type="RefSeq" id="WP_002918379.1">
    <property type="nucleotide sequence ID" value="NC_009648.1"/>
</dbReference>
<dbReference type="SMR" id="A6TEK5"/>
<dbReference type="STRING" id="272620.KPN_03596"/>
<dbReference type="jPOST" id="A6TEK5"/>
<dbReference type="PaxDb" id="272620-KPN_03596"/>
<dbReference type="EnsemblBacteria" id="ABR78989">
    <property type="protein sequence ID" value="ABR78989"/>
    <property type="gene ID" value="KPN_03596"/>
</dbReference>
<dbReference type="GeneID" id="93271097"/>
<dbReference type="KEGG" id="kpn:KPN_03596"/>
<dbReference type="HOGENOM" id="CLU_061463_3_3_6"/>
<dbReference type="Proteomes" id="UP000000265">
    <property type="component" value="Chromosome"/>
</dbReference>
<dbReference type="GO" id="GO:0005737">
    <property type="term" value="C:cytoplasm"/>
    <property type="evidence" value="ECO:0007669"/>
    <property type="project" value="UniProtKB-ARBA"/>
</dbReference>
<dbReference type="GO" id="GO:1990904">
    <property type="term" value="C:ribonucleoprotein complex"/>
    <property type="evidence" value="ECO:0007669"/>
    <property type="project" value="UniProtKB-KW"/>
</dbReference>
<dbReference type="GO" id="GO:0005840">
    <property type="term" value="C:ribosome"/>
    <property type="evidence" value="ECO:0007669"/>
    <property type="project" value="UniProtKB-KW"/>
</dbReference>
<dbReference type="GO" id="GO:0019843">
    <property type="term" value="F:rRNA binding"/>
    <property type="evidence" value="ECO:0007669"/>
    <property type="project" value="UniProtKB-UniRule"/>
</dbReference>
<dbReference type="GO" id="GO:0003735">
    <property type="term" value="F:structural constituent of ribosome"/>
    <property type="evidence" value="ECO:0007669"/>
    <property type="project" value="InterPro"/>
</dbReference>
<dbReference type="GO" id="GO:0006412">
    <property type="term" value="P:translation"/>
    <property type="evidence" value="ECO:0007669"/>
    <property type="project" value="UniProtKB-UniRule"/>
</dbReference>
<dbReference type="HAMAP" id="MF_01363">
    <property type="entry name" value="Ribosomal_bL21"/>
    <property type="match status" value="1"/>
</dbReference>
<dbReference type="InterPro" id="IPR028909">
    <property type="entry name" value="bL21-like"/>
</dbReference>
<dbReference type="InterPro" id="IPR036164">
    <property type="entry name" value="bL21-like_sf"/>
</dbReference>
<dbReference type="InterPro" id="IPR001787">
    <property type="entry name" value="Ribosomal_bL21"/>
</dbReference>
<dbReference type="InterPro" id="IPR018258">
    <property type="entry name" value="Ribosomal_bL21_CS"/>
</dbReference>
<dbReference type="NCBIfam" id="TIGR00061">
    <property type="entry name" value="L21"/>
    <property type="match status" value="1"/>
</dbReference>
<dbReference type="PANTHER" id="PTHR21349">
    <property type="entry name" value="50S RIBOSOMAL PROTEIN L21"/>
    <property type="match status" value="1"/>
</dbReference>
<dbReference type="PANTHER" id="PTHR21349:SF0">
    <property type="entry name" value="LARGE RIBOSOMAL SUBUNIT PROTEIN BL21M"/>
    <property type="match status" value="1"/>
</dbReference>
<dbReference type="Pfam" id="PF00829">
    <property type="entry name" value="Ribosomal_L21p"/>
    <property type="match status" value="1"/>
</dbReference>
<dbReference type="SUPFAM" id="SSF141091">
    <property type="entry name" value="L21p-like"/>
    <property type="match status" value="1"/>
</dbReference>
<dbReference type="PROSITE" id="PS01169">
    <property type="entry name" value="RIBOSOMAL_L21"/>
    <property type="match status" value="1"/>
</dbReference>
<proteinExistence type="inferred from homology"/>
<protein>
    <recommendedName>
        <fullName evidence="1">Large ribosomal subunit protein bL21</fullName>
    </recommendedName>
    <alternativeName>
        <fullName evidence="2">50S ribosomal protein L21</fullName>
    </alternativeName>
</protein>
<comment type="function">
    <text evidence="1">This protein binds to 23S rRNA in the presence of protein L20.</text>
</comment>
<comment type="subunit">
    <text evidence="1">Part of the 50S ribosomal subunit. Contacts protein L20.</text>
</comment>
<comment type="similarity">
    <text evidence="1">Belongs to the bacterial ribosomal protein bL21 family.</text>
</comment>
<accession>A6TEK5</accession>
<reference key="1">
    <citation type="submission" date="2006-09" db="EMBL/GenBank/DDBJ databases">
        <authorList>
            <consortium name="The Klebsiella pneumonia Genome Sequencing Project"/>
            <person name="McClelland M."/>
            <person name="Sanderson E.K."/>
            <person name="Spieth J."/>
            <person name="Clifton W.S."/>
            <person name="Latreille P."/>
            <person name="Sabo A."/>
            <person name="Pepin K."/>
            <person name="Bhonagiri V."/>
            <person name="Porwollik S."/>
            <person name="Ali J."/>
            <person name="Wilson R.K."/>
        </authorList>
    </citation>
    <scope>NUCLEOTIDE SEQUENCE [LARGE SCALE GENOMIC DNA]</scope>
    <source>
        <strain>ATCC 700721 / MGH 78578</strain>
    </source>
</reference>